<feature type="chain" id="PRO_0000162677" description="Ribosomal large subunit pseudouridine synthase C">
    <location>
        <begin position="1"/>
        <end position="319"/>
    </location>
</feature>
<feature type="domain" description="S4 RNA-binding" evidence="2">
    <location>
        <begin position="20"/>
        <end position="83"/>
    </location>
</feature>
<feature type="active site" evidence="1">
    <location>
        <position position="144"/>
    </location>
</feature>
<dbReference type="EC" id="5.4.99.24"/>
<dbReference type="EMBL" id="AE006468">
    <property type="protein sequence ID" value="AAL20116.1"/>
    <property type="molecule type" value="Genomic_DNA"/>
</dbReference>
<dbReference type="RefSeq" id="NP_460157.1">
    <property type="nucleotide sequence ID" value="NC_003197.2"/>
</dbReference>
<dbReference type="RefSeq" id="WP_000846319.1">
    <property type="nucleotide sequence ID" value="NC_003197.2"/>
</dbReference>
<dbReference type="SMR" id="Q8ZQ16"/>
<dbReference type="STRING" id="99287.STM1187"/>
<dbReference type="PaxDb" id="99287-STM1187"/>
<dbReference type="GeneID" id="1252705"/>
<dbReference type="KEGG" id="stm:STM1187"/>
<dbReference type="PATRIC" id="fig|99287.12.peg.1255"/>
<dbReference type="HOGENOM" id="CLU_016902_1_1_6"/>
<dbReference type="PhylomeDB" id="Q8ZQ16"/>
<dbReference type="BioCyc" id="SENT99287:STM1187-MONOMER"/>
<dbReference type="Proteomes" id="UP000001014">
    <property type="component" value="Chromosome"/>
</dbReference>
<dbReference type="GO" id="GO:0160141">
    <property type="term" value="F:23S rRNA pseudouridine(955/2504/2580) synthase activity"/>
    <property type="evidence" value="ECO:0007669"/>
    <property type="project" value="UniProtKB-EC"/>
</dbReference>
<dbReference type="GO" id="GO:0009982">
    <property type="term" value="F:pseudouridine synthase activity"/>
    <property type="evidence" value="ECO:0000318"/>
    <property type="project" value="GO_Central"/>
</dbReference>
<dbReference type="GO" id="GO:0003723">
    <property type="term" value="F:RNA binding"/>
    <property type="evidence" value="ECO:0007669"/>
    <property type="project" value="UniProtKB-KW"/>
</dbReference>
<dbReference type="GO" id="GO:0000455">
    <property type="term" value="P:enzyme-directed rRNA pseudouridine synthesis"/>
    <property type="evidence" value="ECO:0000318"/>
    <property type="project" value="GO_Central"/>
</dbReference>
<dbReference type="CDD" id="cd02869">
    <property type="entry name" value="PseudoU_synth_RluA_like"/>
    <property type="match status" value="1"/>
</dbReference>
<dbReference type="CDD" id="cd00165">
    <property type="entry name" value="S4"/>
    <property type="match status" value="1"/>
</dbReference>
<dbReference type="FunFam" id="3.10.290.10:FF:000010">
    <property type="entry name" value="Pseudouridine synthase"/>
    <property type="match status" value="1"/>
</dbReference>
<dbReference type="FunFam" id="3.30.2350.10:FF:000007">
    <property type="entry name" value="Pseudouridine synthase"/>
    <property type="match status" value="1"/>
</dbReference>
<dbReference type="Gene3D" id="3.30.2350.10">
    <property type="entry name" value="Pseudouridine synthase"/>
    <property type="match status" value="1"/>
</dbReference>
<dbReference type="Gene3D" id="3.10.290.10">
    <property type="entry name" value="RNA-binding S4 domain"/>
    <property type="match status" value="1"/>
</dbReference>
<dbReference type="InterPro" id="IPR020103">
    <property type="entry name" value="PsdUridine_synth_cat_dom_sf"/>
</dbReference>
<dbReference type="InterPro" id="IPR006224">
    <property type="entry name" value="PsdUridine_synth_RluA-like_CS"/>
</dbReference>
<dbReference type="InterPro" id="IPR006225">
    <property type="entry name" value="PsdUridine_synth_RluC/D"/>
</dbReference>
<dbReference type="InterPro" id="IPR006145">
    <property type="entry name" value="PsdUridine_synth_RsuA/RluA"/>
</dbReference>
<dbReference type="InterPro" id="IPR050188">
    <property type="entry name" value="RluA_PseudoU_synthase"/>
</dbReference>
<dbReference type="InterPro" id="IPR002942">
    <property type="entry name" value="S4_RNA-bd"/>
</dbReference>
<dbReference type="InterPro" id="IPR036986">
    <property type="entry name" value="S4_RNA-bd_sf"/>
</dbReference>
<dbReference type="NCBIfam" id="NF008249">
    <property type="entry name" value="PRK11025.1"/>
    <property type="match status" value="1"/>
</dbReference>
<dbReference type="NCBIfam" id="TIGR00005">
    <property type="entry name" value="rluA_subfam"/>
    <property type="match status" value="1"/>
</dbReference>
<dbReference type="PANTHER" id="PTHR21600">
    <property type="entry name" value="MITOCHONDRIAL RNA PSEUDOURIDINE SYNTHASE"/>
    <property type="match status" value="1"/>
</dbReference>
<dbReference type="PANTHER" id="PTHR21600:SF92">
    <property type="entry name" value="RIBOSOMAL LARGE SUBUNIT PSEUDOURIDINE SYNTHASE C"/>
    <property type="match status" value="1"/>
</dbReference>
<dbReference type="Pfam" id="PF00849">
    <property type="entry name" value="PseudoU_synth_2"/>
    <property type="match status" value="1"/>
</dbReference>
<dbReference type="Pfam" id="PF01479">
    <property type="entry name" value="S4"/>
    <property type="match status" value="1"/>
</dbReference>
<dbReference type="SMART" id="SM00363">
    <property type="entry name" value="S4"/>
    <property type="match status" value="1"/>
</dbReference>
<dbReference type="SUPFAM" id="SSF55174">
    <property type="entry name" value="Alpha-L RNA-binding motif"/>
    <property type="match status" value="1"/>
</dbReference>
<dbReference type="SUPFAM" id="SSF55120">
    <property type="entry name" value="Pseudouridine synthase"/>
    <property type="match status" value="1"/>
</dbReference>
<dbReference type="PROSITE" id="PS01129">
    <property type="entry name" value="PSI_RLU"/>
    <property type="match status" value="1"/>
</dbReference>
<dbReference type="PROSITE" id="PS50889">
    <property type="entry name" value="S4"/>
    <property type="match status" value="1"/>
</dbReference>
<name>RLUC_SALTY</name>
<organism>
    <name type="scientific">Salmonella typhimurium (strain LT2 / SGSC1412 / ATCC 700720)</name>
    <dbReference type="NCBI Taxonomy" id="99287"/>
    <lineage>
        <taxon>Bacteria</taxon>
        <taxon>Pseudomonadati</taxon>
        <taxon>Pseudomonadota</taxon>
        <taxon>Gammaproteobacteria</taxon>
        <taxon>Enterobacterales</taxon>
        <taxon>Enterobacteriaceae</taxon>
        <taxon>Salmonella</taxon>
    </lineage>
</organism>
<proteinExistence type="inferred from homology"/>
<evidence type="ECO:0000250" key="1"/>
<evidence type="ECO:0000255" key="2">
    <source>
        <dbReference type="PROSITE-ProRule" id="PRU00182"/>
    </source>
</evidence>
<evidence type="ECO:0000305" key="3"/>
<accession>Q8ZQ16</accession>
<reference key="1">
    <citation type="journal article" date="2001" name="Nature">
        <title>Complete genome sequence of Salmonella enterica serovar Typhimurium LT2.</title>
        <authorList>
            <person name="McClelland M."/>
            <person name="Sanderson K.E."/>
            <person name="Spieth J."/>
            <person name="Clifton S.W."/>
            <person name="Latreille P."/>
            <person name="Courtney L."/>
            <person name="Porwollik S."/>
            <person name="Ali J."/>
            <person name="Dante M."/>
            <person name="Du F."/>
            <person name="Hou S."/>
            <person name="Layman D."/>
            <person name="Leonard S."/>
            <person name="Nguyen C."/>
            <person name="Scott K."/>
            <person name="Holmes A."/>
            <person name="Grewal N."/>
            <person name="Mulvaney E."/>
            <person name="Ryan E."/>
            <person name="Sun H."/>
            <person name="Florea L."/>
            <person name="Miller W."/>
            <person name="Stoneking T."/>
            <person name="Nhan M."/>
            <person name="Waterston R."/>
            <person name="Wilson R.K."/>
        </authorList>
    </citation>
    <scope>NUCLEOTIDE SEQUENCE [LARGE SCALE GENOMIC DNA]</scope>
    <source>
        <strain>LT2 / SGSC1412 / ATCC 700720</strain>
    </source>
</reference>
<comment type="function">
    <text evidence="1">Responsible for synthesis of pseudouridine from uracil at positions 955, 2504 and 2580 in 23S ribosomal RNA.</text>
</comment>
<comment type="catalytic activity">
    <reaction>
        <text>uridine(955/2504/2580) in 23S rRNA = pseudouridine(955/2504/2580) in 23S rRNA</text>
        <dbReference type="Rhea" id="RHEA:42528"/>
        <dbReference type="Rhea" id="RHEA-COMP:10099"/>
        <dbReference type="Rhea" id="RHEA-COMP:10100"/>
        <dbReference type="ChEBI" id="CHEBI:65314"/>
        <dbReference type="ChEBI" id="CHEBI:65315"/>
        <dbReference type="EC" id="5.4.99.24"/>
    </reaction>
</comment>
<comment type="similarity">
    <text evidence="3">Belongs to the pseudouridine synthase RluA family.</text>
</comment>
<gene>
    <name type="primary">rluC</name>
    <name type="ordered locus">STM1187</name>
</gene>
<keyword id="KW-0413">Isomerase</keyword>
<keyword id="KW-1185">Reference proteome</keyword>
<keyword id="KW-0694">RNA-binding</keyword>
<keyword id="KW-0698">rRNA processing</keyword>
<protein>
    <recommendedName>
        <fullName>Ribosomal large subunit pseudouridine synthase C</fullName>
        <ecNumber>5.4.99.24</ecNumber>
    </recommendedName>
    <alternativeName>
        <fullName>23S rRNA pseudouridine(955/2504/2580) synthase</fullName>
    </alternativeName>
    <alternativeName>
        <fullName>rRNA pseudouridylate synthase C</fullName>
    </alternativeName>
    <alternativeName>
        <fullName>rRNA-uridine isomerase C</fullName>
    </alternativeName>
</protein>
<sequence>MKTETPSVKIVAIAADEAGQRIDNFLRTQLKGVPKSMIYRILRKGEVRVNKKRIKPEYKLEAGDEVRIPPVRVAEREEEAVSPHLQKVAALADVILYEDDHILVLNKPSGTAVHGGSGLSFGVIEGLRALRPEARFLELVHRLDRDTSGVLLVAKKRSALRSLHEQLREKGMQKDYLALVRGQWQSHVKTVQAPLLKNILQSGERIVRVSQEGKPSETRFKVEERYAFATLVRCSPVTGRTHQIRVHTQYAGHPIAFDDRYGDREFDQQLTEAGTGLKRLFLHAAALKFTHPGTGEVMRIEAPMDNALKRCLQVLRNAK</sequence>